<gene>
    <name evidence="1" type="primary">rplU</name>
    <name type="ordered locus">Dhaf_4338</name>
</gene>
<organism>
    <name type="scientific">Desulfitobacterium hafniense (strain DSM 10664 / DCB-2)</name>
    <dbReference type="NCBI Taxonomy" id="272564"/>
    <lineage>
        <taxon>Bacteria</taxon>
        <taxon>Bacillati</taxon>
        <taxon>Bacillota</taxon>
        <taxon>Clostridia</taxon>
        <taxon>Eubacteriales</taxon>
        <taxon>Desulfitobacteriaceae</taxon>
        <taxon>Desulfitobacterium</taxon>
    </lineage>
</organism>
<keyword id="KW-0687">Ribonucleoprotein</keyword>
<keyword id="KW-0689">Ribosomal protein</keyword>
<keyword id="KW-0694">RNA-binding</keyword>
<keyword id="KW-0699">rRNA-binding</keyword>
<evidence type="ECO:0000255" key="1">
    <source>
        <dbReference type="HAMAP-Rule" id="MF_01363"/>
    </source>
</evidence>
<evidence type="ECO:0000305" key="2"/>
<comment type="function">
    <text evidence="1">This protein binds to 23S rRNA in the presence of protein L20.</text>
</comment>
<comment type="subunit">
    <text evidence="1">Part of the 50S ribosomal subunit. Contacts protein L20.</text>
</comment>
<comment type="similarity">
    <text evidence="1">Belongs to the bacterial ribosomal protein bL21 family.</text>
</comment>
<proteinExistence type="inferred from homology"/>
<reference key="1">
    <citation type="journal article" date="2012" name="BMC Microbiol.">
        <title>Genome sequence of Desulfitobacterium hafniense DCB-2, a Gram-positive anaerobe capable of dehalogenation and metal reduction.</title>
        <authorList>
            <person name="Kim S.H."/>
            <person name="Harzman C."/>
            <person name="Davis J.K."/>
            <person name="Hutcheson R."/>
            <person name="Broderick J.B."/>
            <person name="Marsh T.L."/>
            <person name="Tiedje J.M."/>
        </authorList>
    </citation>
    <scope>NUCLEOTIDE SEQUENCE [LARGE SCALE GENOMIC DNA]</scope>
    <source>
        <strain>DSM 10664 / DCB-2</strain>
    </source>
</reference>
<accession>B8FUS3</accession>
<name>RL21_DESHD</name>
<dbReference type="EMBL" id="CP001336">
    <property type="protein sequence ID" value="ACL22343.1"/>
    <property type="molecule type" value="Genomic_DNA"/>
</dbReference>
<dbReference type="RefSeq" id="WP_011460896.1">
    <property type="nucleotide sequence ID" value="NC_011830.1"/>
</dbReference>
<dbReference type="SMR" id="B8FUS3"/>
<dbReference type="KEGG" id="dhd:Dhaf_4338"/>
<dbReference type="HOGENOM" id="CLU_061463_3_2_9"/>
<dbReference type="Proteomes" id="UP000007726">
    <property type="component" value="Chromosome"/>
</dbReference>
<dbReference type="GO" id="GO:0005737">
    <property type="term" value="C:cytoplasm"/>
    <property type="evidence" value="ECO:0007669"/>
    <property type="project" value="UniProtKB-ARBA"/>
</dbReference>
<dbReference type="GO" id="GO:1990904">
    <property type="term" value="C:ribonucleoprotein complex"/>
    <property type="evidence" value="ECO:0007669"/>
    <property type="project" value="UniProtKB-KW"/>
</dbReference>
<dbReference type="GO" id="GO:0005840">
    <property type="term" value="C:ribosome"/>
    <property type="evidence" value="ECO:0007669"/>
    <property type="project" value="UniProtKB-KW"/>
</dbReference>
<dbReference type="GO" id="GO:0019843">
    <property type="term" value="F:rRNA binding"/>
    <property type="evidence" value="ECO:0007669"/>
    <property type="project" value="UniProtKB-UniRule"/>
</dbReference>
<dbReference type="GO" id="GO:0003735">
    <property type="term" value="F:structural constituent of ribosome"/>
    <property type="evidence" value="ECO:0007669"/>
    <property type="project" value="InterPro"/>
</dbReference>
<dbReference type="GO" id="GO:0006412">
    <property type="term" value="P:translation"/>
    <property type="evidence" value="ECO:0007669"/>
    <property type="project" value="UniProtKB-UniRule"/>
</dbReference>
<dbReference type="HAMAP" id="MF_01363">
    <property type="entry name" value="Ribosomal_bL21"/>
    <property type="match status" value="1"/>
</dbReference>
<dbReference type="InterPro" id="IPR028909">
    <property type="entry name" value="bL21-like"/>
</dbReference>
<dbReference type="InterPro" id="IPR036164">
    <property type="entry name" value="bL21-like_sf"/>
</dbReference>
<dbReference type="InterPro" id="IPR001787">
    <property type="entry name" value="Ribosomal_bL21"/>
</dbReference>
<dbReference type="InterPro" id="IPR018258">
    <property type="entry name" value="Ribosomal_bL21_CS"/>
</dbReference>
<dbReference type="NCBIfam" id="TIGR00061">
    <property type="entry name" value="L21"/>
    <property type="match status" value="1"/>
</dbReference>
<dbReference type="PANTHER" id="PTHR21349">
    <property type="entry name" value="50S RIBOSOMAL PROTEIN L21"/>
    <property type="match status" value="1"/>
</dbReference>
<dbReference type="PANTHER" id="PTHR21349:SF0">
    <property type="entry name" value="LARGE RIBOSOMAL SUBUNIT PROTEIN BL21M"/>
    <property type="match status" value="1"/>
</dbReference>
<dbReference type="Pfam" id="PF00829">
    <property type="entry name" value="Ribosomal_L21p"/>
    <property type="match status" value="1"/>
</dbReference>
<dbReference type="SUPFAM" id="SSF141091">
    <property type="entry name" value="L21p-like"/>
    <property type="match status" value="1"/>
</dbReference>
<dbReference type="PROSITE" id="PS01169">
    <property type="entry name" value="RIBOSOMAL_L21"/>
    <property type="match status" value="1"/>
</dbReference>
<protein>
    <recommendedName>
        <fullName evidence="1">Large ribosomal subunit protein bL21</fullName>
    </recommendedName>
    <alternativeName>
        <fullName evidence="2">50S ribosomal protein L21</fullName>
    </alternativeName>
</protein>
<sequence>MYAVIETGGKQFRVEEGKVLFVEKLDANVGDTVTIDKVLLVEKDGAVKVGTPVVDGAKALLKVVEHGKGEKIIVFKMKSKKNYRRKQGHRQPYTKVVVEAIQA</sequence>
<feature type="chain" id="PRO_1000166719" description="Large ribosomal subunit protein bL21">
    <location>
        <begin position="1"/>
        <end position="103"/>
    </location>
</feature>